<protein>
    <recommendedName>
        <fullName evidence="1">Adenine deaminase</fullName>
        <shortName evidence="1">Adenase</shortName>
        <shortName evidence="1">Adenine aminase</shortName>
        <ecNumber evidence="1">3.5.4.2</ecNumber>
    </recommendedName>
</protein>
<proteinExistence type="inferred from homology"/>
<keyword id="KW-0378">Hydrolase</keyword>
<keyword id="KW-0464">Manganese</keyword>
<keyword id="KW-1185">Reference proteome</keyword>
<accession>A0RZ37</accession>
<dbReference type="EC" id="3.5.4.2" evidence="1"/>
<dbReference type="EMBL" id="DP000238">
    <property type="protein sequence ID" value="ABK78604.1"/>
    <property type="molecule type" value="Genomic_DNA"/>
</dbReference>
<dbReference type="SMR" id="A0RZ37"/>
<dbReference type="STRING" id="414004.CENSYa_2000"/>
<dbReference type="EnsemblBacteria" id="ABK78604">
    <property type="protein sequence ID" value="ABK78604"/>
    <property type="gene ID" value="CENSYa_2000"/>
</dbReference>
<dbReference type="KEGG" id="csy:CENSYa_2000"/>
<dbReference type="PATRIC" id="fig|414004.10.peg.1832"/>
<dbReference type="HOGENOM" id="CLU_027935_0_0_2"/>
<dbReference type="Proteomes" id="UP000000758">
    <property type="component" value="Chromosome"/>
</dbReference>
<dbReference type="GO" id="GO:0000034">
    <property type="term" value="F:adenine deaminase activity"/>
    <property type="evidence" value="ECO:0007669"/>
    <property type="project" value="UniProtKB-UniRule"/>
</dbReference>
<dbReference type="GO" id="GO:0006146">
    <property type="term" value="P:adenine catabolic process"/>
    <property type="evidence" value="ECO:0007669"/>
    <property type="project" value="InterPro"/>
</dbReference>
<dbReference type="Gene3D" id="3.20.20.140">
    <property type="entry name" value="Metal-dependent hydrolases"/>
    <property type="match status" value="1"/>
</dbReference>
<dbReference type="Gene3D" id="2.30.40.10">
    <property type="entry name" value="Urease, subunit C, domain 1"/>
    <property type="match status" value="1"/>
</dbReference>
<dbReference type="HAMAP" id="MF_01518">
    <property type="entry name" value="Adenine_deamin"/>
    <property type="match status" value="1"/>
</dbReference>
<dbReference type="InterPro" id="IPR006679">
    <property type="entry name" value="Adenine_deam"/>
</dbReference>
<dbReference type="InterPro" id="IPR026912">
    <property type="entry name" value="Adenine_deam_C"/>
</dbReference>
<dbReference type="InterPro" id="IPR006680">
    <property type="entry name" value="Amidohydro-rel"/>
</dbReference>
<dbReference type="InterPro" id="IPR011059">
    <property type="entry name" value="Metal-dep_hydrolase_composite"/>
</dbReference>
<dbReference type="InterPro" id="IPR032466">
    <property type="entry name" value="Metal_Hydrolase"/>
</dbReference>
<dbReference type="PANTHER" id="PTHR11113:SF2">
    <property type="entry name" value="ADENINE DEAMINASE"/>
    <property type="match status" value="1"/>
</dbReference>
<dbReference type="PANTHER" id="PTHR11113">
    <property type="entry name" value="N-ACETYLGLUCOSAMINE-6-PHOSPHATE DEACETYLASE"/>
    <property type="match status" value="1"/>
</dbReference>
<dbReference type="Pfam" id="PF13382">
    <property type="entry name" value="Adenine_deam_C"/>
    <property type="match status" value="1"/>
</dbReference>
<dbReference type="Pfam" id="PF01979">
    <property type="entry name" value="Amidohydro_1"/>
    <property type="match status" value="1"/>
</dbReference>
<dbReference type="SUPFAM" id="SSF51338">
    <property type="entry name" value="Composite domain of metallo-dependent hydrolases"/>
    <property type="match status" value="1"/>
</dbReference>
<dbReference type="SUPFAM" id="SSF51556">
    <property type="entry name" value="Metallo-dependent hydrolases"/>
    <property type="match status" value="1"/>
</dbReference>
<sequence>MRPLSRSISRLAAVAMGDRKADLIIQNCSLVSVYTGEVIEGTEIAVSGDRIAYVGPDASHARGAGTVIHNAQGRYAAPGFADPHIHVDQFVTPAELAAQSVLHGTTSLFSDPIDMVGVAGYRGFRTLMNMSKDLPARFFHVVPGGLPVDGRFSHSNTLSPEEERSAIGLPDVLGMGEVFSWTKVTSRDPGTMRSIGTMLDGGCIINGHTAGASGKKLSAYVSAGILSCHEPVNAEQAEERLRLGMWVMMREGSIRRDLAEILPPMLKKEAGLDRLMFCTDGIDPVDMGEKGHIDHCVREAVRLGADPVRAIAMASRNCFDYYNMARDLGGISPGRIADIQMLYDLESFRPEDVFVGGNRMVSGGKLVSRQHPVKAPSWTRRTIRLGRLTAADFAVHSRKKTEQVNTITMKTEIITEQGSAELSVKEGNVEPSRDSDVWKVAAFDRLSGNGGRTVGFLENFGADIGALASSWSFHENDLVVLGSSEIEMAKAANAVMDKGGGIAVVQKGRVSAMLPLQICGIISSDPFGKVSEGLSKLTSVMTDAGCTFQRPHLVPVFLPFLALPSVRILYSGMVDVRRRSYIPVIAGARTASQRPKTLRNIKKGPKSVR</sequence>
<reference key="1">
    <citation type="journal article" date="2006" name="Proc. Natl. Acad. Sci. U.S.A.">
        <title>Genomic analysis of the uncultivated marine crenarchaeote Cenarchaeum symbiosum.</title>
        <authorList>
            <person name="Hallam S.J."/>
            <person name="Konstantinidis K.T."/>
            <person name="Putnam N."/>
            <person name="Schleper C."/>
            <person name="Watanabe Y."/>
            <person name="Sugahara J."/>
            <person name="Preston C."/>
            <person name="de la Torre J."/>
            <person name="Richardson P.M."/>
            <person name="DeLong E.F."/>
        </authorList>
    </citation>
    <scope>NUCLEOTIDE SEQUENCE [LARGE SCALE GENOMIC DNA]</scope>
    <source>
        <strain>A</strain>
    </source>
</reference>
<comment type="catalytic activity">
    <reaction evidence="1">
        <text>adenine + H2O + H(+) = hypoxanthine + NH4(+)</text>
        <dbReference type="Rhea" id="RHEA:23688"/>
        <dbReference type="ChEBI" id="CHEBI:15377"/>
        <dbReference type="ChEBI" id="CHEBI:15378"/>
        <dbReference type="ChEBI" id="CHEBI:16708"/>
        <dbReference type="ChEBI" id="CHEBI:17368"/>
        <dbReference type="ChEBI" id="CHEBI:28938"/>
        <dbReference type="EC" id="3.5.4.2"/>
    </reaction>
</comment>
<comment type="cofactor">
    <cofactor evidence="1">
        <name>Mn(2+)</name>
        <dbReference type="ChEBI" id="CHEBI:29035"/>
    </cofactor>
</comment>
<comment type="similarity">
    <text evidence="1">Belongs to the metallo-dependent hydrolases superfamily. Adenine deaminase family.</text>
</comment>
<feature type="chain" id="PRO_0000296735" description="Adenine deaminase">
    <location>
        <begin position="1"/>
        <end position="609"/>
    </location>
</feature>
<evidence type="ECO:0000255" key="1">
    <source>
        <dbReference type="HAMAP-Rule" id="MF_01518"/>
    </source>
</evidence>
<organism>
    <name type="scientific">Cenarchaeum symbiosum (strain A)</name>
    <dbReference type="NCBI Taxonomy" id="414004"/>
    <lineage>
        <taxon>Archaea</taxon>
        <taxon>Nitrososphaerota</taxon>
        <taxon>Candidatus Cenarchaeales</taxon>
        <taxon>Candidatus Cenarchaeaceae</taxon>
        <taxon>Candidatus Cenarchaeum</taxon>
    </lineage>
</organism>
<gene>
    <name evidence="1" type="primary">ade</name>
    <name type="ordered locus">CENSYa_2000</name>
</gene>
<name>ADEC_CENSY</name>